<proteinExistence type="inferred from homology"/>
<gene>
    <name evidence="1" type="primary">cmk</name>
    <name type="ordered locus">EcE24377A_1007</name>
</gene>
<reference key="1">
    <citation type="journal article" date="2008" name="J. Bacteriol.">
        <title>The pangenome structure of Escherichia coli: comparative genomic analysis of E. coli commensal and pathogenic isolates.</title>
        <authorList>
            <person name="Rasko D.A."/>
            <person name="Rosovitz M.J."/>
            <person name="Myers G.S.A."/>
            <person name="Mongodin E.F."/>
            <person name="Fricke W.F."/>
            <person name="Gajer P."/>
            <person name="Crabtree J."/>
            <person name="Sebaihia M."/>
            <person name="Thomson N.R."/>
            <person name="Chaudhuri R."/>
            <person name="Henderson I.R."/>
            <person name="Sperandio V."/>
            <person name="Ravel J."/>
        </authorList>
    </citation>
    <scope>NUCLEOTIDE SEQUENCE [LARGE SCALE GENOMIC DNA]</scope>
    <source>
        <strain>E24377A / ETEC</strain>
    </source>
</reference>
<sequence length="227" mass="24746">MTAIAPVITIDGPSGAGKGTLCKAMAEALQWHLLDSGAIYRVLALAALHHHVDVASEDALVPLASHLDVRFVSTNGNLEVILEGEDVSGEIRTQEVANAASQVAAFPRVREALLRRQRAFRELPGLIADGRDMGTVVFPDAPVKIFLDASSEERAHRRMLQLQEKGFSVNFERLLAEIKERDDRDRNRAVAPLVPAADALVLDSTTLSIEQVIEKALQYARQKLALA</sequence>
<feature type="chain" id="PRO_1000058976" description="Cytidylate kinase">
    <location>
        <begin position="1"/>
        <end position="227"/>
    </location>
</feature>
<feature type="binding site" evidence="1">
    <location>
        <begin position="12"/>
        <end position="20"/>
    </location>
    <ligand>
        <name>ATP</name>
        <dbReference type="ChEBI" id="CHEBI:30616"/>
    </ligand>
</feature>
<protein>
    <recommendedName>
        <fullName evidence="1">Cytidylate kinase</fullName>
        <shortName evidence="1">CK</shortName>
        <ecNumber evidence="1">2.7.4.25</ecNumber>
    </recommendedName>
    <alternativeName>
        <fullName evidence="1">Cytidine monophosphate kinase</fullName>
        <shortName evidence="1">CMP kinase</shortName>
    </alternativeName>
</protein>
<comment type="catalytic activity">
    <reaction evidence="1">
        <text>CMP + ATP = CDP + ADP</text>
        <dbReference type="Rhea" id="RHEA:11600"/>
        <dbReference type="ChEBI" id="CHEBI:30616"/>
        <dbReference type="ChEBI" id="CHEBI:58069"/>
        <dbReference type="ChEBI" id="CHEBI:60377"/>
        <dbReference type="ChEBI" id="CHEBI:456216"/>
        <dbReference type="EC" id="2.7.4.25"/>
    </reaction>
</comment>
<comment type="catalytic activity">
    <reaction evidence="1">
        <text>dCMP + ATP = dCDP + ADP</text>
        <dbReference type="Rhea" id="RHEA:25094"/>
        <dbReference type="ChEBI" id="CHEBI:30616"/>
        <dbReference type="ChEBI" id="CHEBI:57566"/>
        <dbReference type="ChEBI" id="CHEBI:58593"/>
        <dbReference type="ChEBI" id="CHEBI:456216"/>
        <dbReference type="EC" id="2.7.4.25"/>
    </reaction>
</comment>
<comment type="subcellular location">
    <subcellularLocation>
        <location evidence="1">Cytoplasm</location>
    </subcellularLocation>
</comment>
<comment type="similarity">
    <text evidence="1">Belongs to the cytidylate kinase family. Type 1 subfamily.</text>
</comment>
<evidence type="ECO:0000255" key="1">
    <source>
        <dbReference type="HAMAP-Rule" id="MF_00238"/>
    </source>
</evidence>
<organism>
    <name type="scientific">Escherichia coli O139:H28 (strain E24377A / ETEC)</name>
    <dbReference type="NCBI Taxonomy" id="331111"/>
    <lineage>
        <taxon>Bacteria</taxon>
        <taxon>Pseudomonadati</taxon>
        <taxon>Pseudomonadota</taxon>
        <taxon>Gammaproteobacteria</taxon>
        <taxon>Enterobacterales</taxon>
        <taxon>Enterobacteriaceae</taxon>
        <taxon>Escherichia</taxon>
    </lineage>
</organism>
<name>KCY_ECO24</name>
<dbReference type="EC" id="2.7.4.25" evidence="1"/>
<dbReference type="EMBL" id="CP000800">
    <property type="protein sequence ID" value="ABV19781.1"/>
    <property type="molecule type" value="Genomic_DNA"/>
</dbReference>
<dbReference type="RefSeq" id="WP_000125016.1">
    <property type="nucleotide sequence ID" value="NC_009801.1"/>
</dbReference>
<dbReference type="SMR" id="A7ZJZ9"/>
<dbReference type="GeneID" id="93776507"/>
<dbReference type="KEGG" id="ecw:EcE24377A_1007"/>
<dbReference type="HOGENOM" id="CLU_079959_0_2_6"/>
<dbReference type="Proteomes" id="UP000001122">
    <property type="component" value="Chromosome"/>
</dbReference>
<dbReference type="GO" id="GO:0005829">
    <property type="term" value="C:cytosol"/>
    <property type="evidence" value="ECO:0007669"/>
    <property type="project" value="TreeGrafter"/>
</dbReference>
<dbReference type="GO" id="GO:0005524">
    <property type="term" value="F:ATP binding"/>
    <property type="evidence" value="ECO:0007669"/>
    <property type="project" value="UniProtKB-UniRule"/>
</dbReference>
<dbReference type="GO" id="GO:0036430">
    <property type="term" value="F:CMP kinase activity"/>
    <property type="evidence" value="ECO:0007669"/>
    <property type="project" value="RHEA"/>
</dbReference>
<dbReference type="GO" id="GO:0036431">
    <property type="term" value="F:dCMP kinase activity"/>
    <property type="evidence" value="ECO:0007669"/>
    <property type="project" value="RHEA"/>
</dbReference>
<dbReference type="GO" id="GO:0015949">
    <property type="term" value="P:nucleobase-containing small molecule interconversion"/>
    <property type="evidence" value="ECO:0007669"/>
    <property type="project" value="TreeGrafter"/>
</dbReference>
<dbReference type="GO" id="GO:0006220">
    <property type="term" value="P:pyrimidine nucleotide metabolic process"/>
    <property type="evidence" value="ECO:0007669"/>
    <property type="project" value="UniProtKB-UniRule"/>
</dbReference>
<dbReference type="CDD" id="cd02020">
    <property type="entry name" value="CMPK"/>
    <property type="match status" value="1"/>
</dbReference>
<dbReference type="FunFam" id="3.40.50.300:FF:000262">
    <property type="entry name" value="Cytidylate kinase"/>
    <property type="match status" value="1"/>
</dbReference>
<dbReference type="Gene3D" id="3.40.50.300">
    <property type="entry name" value="P-loop containing nucleotide triphosphate hydrolases"/>
    <property type="match status" value="1"/>
</dbReference>
<dbReference type="HAMAP" id="MF_00238">
    <property type="entry name" value="Cytidyl_kinase_type1"/>
    <property type="match status" value="1"/>
</dbReference>
<dbReference type="InterPro" id="IPR003136">
    <property type="entry name" value="Cytidylate_kin"/>
</dbReference>
<dbReference type="InterPro" id="IPR011994">
    <property type="entry name" value="Cytidylate_kinase_dom"/>
</dbReference>
<dbReference type="InterPro" id="IPR027417">
    <property type="entry name" value="P-loop_NTPase"/>
</dbReference>
<dbReference type="NCBIfam" id="TIGR00017">
    <property type="entry name" value="cmk"/>
    <property type="match status" value="1"/>
</dbReference>
<dbReference type="PANTHER" id="PTHR21299:SF2">
    <property type="entry name" value="CYTIDYLATE KINASE"/>
    <property type="match status" value="1"/>
</dbReference>
<dbReference type="PANTHER" id="PTHR21299">
    <property type="entry name" value="CYTIDYLATE KINASE/PANTOATE-BETA-ALANINE LIGASE"/>
    <property type="match status" value="1"/>
</dbReference>
<dbReference type="Pfam" id="PF02224">
    <property type="entry name" value="Cytidylate_kin"/>
    <property type="match status" value="1"/>
</dbReference>
<dbReference type="SUPFAM" id="SSF52540">
    <property type="entry name" value="P-loop containing nucleoside triphosphate hydrolases"/>
    <property type="match status" value="1"/>
</dbReference>
<keyword id="KW-0067">ATP-binding</keyword>
<keyword id="KW-0963">Cytoplasm</keyword>
<keyword id="KW-0418">Kinase</keyword>
<keyword id="KW-0547">Nucleotide-binding</keyword>
<keyword id="KW-1185">Reference proteome</keyword>
<keyword id="KW-0808">Transferase</keyword>
<accession>A7ZJZ9</accession>